<sequence length="228" mass="24388">MTIITPITNDPTTALLRLMAWLSPVFPAGSFSYSHGLERAVHDGLVVDAAGLQDWLQWLVRRGSGWNDAVLCAESWRCAMKGEDLHEIAELAEALAGSRERHMETMLQGGAFLAAARSWPCEIFDRLPPDCAYPVAVGAVAGGHGVPLAQALAAFLQAFCINLLQASIRLSVTGQSGVTAIMAALEPVLGETAARAALSSMEDLGSATFIADIMAMKHETQHSRLFRS</sequence>
<dbReference type="EMBL" id="CP000708">
    <property type="protein sequence ID" value="ABQ61368.1"/>
    <property type="status" value="ALT_INIT"/>
    <property type="molecule type" value="Genomic_DNA"/>
</dbReference>
<dbReference type="RefSeq" id="WP_025200872.1">
    <property type="nucleotide sequence ID" value="NC_009505.1"/>
</dbReference>
<dbReference type="SMR" id="A5VNL5"/>
<dbReference type="GeneID" id="45123778"/>
<dbReference type="KEGG" id="bov:BOV_0286"/>
<dbReference type="HOGENOM" id="CLU_049215_2_0_5"/>
<dbReference type="Proteomes" id="UP000006383">
    <property type="component" value="Chromosome I"/>
</dbReference>
<dbReference type="GO" id="GO:0005737">
    <property type="term" value="C:cytoplasm"/>
    <property type="evidence" value="ECO:0007669"/>
    <property type="project" value="UniProtKB-SubCell"/>
</dbReference>
<dbReference type="GO" id="GO:0016151">
    <property type="term" value="F:nickel cation binding"/>
    <property type="evidence" value="ECO:0007669"/>
    <property type="project" value="UniProtKB-UniRule"/>
</dbReference>
<dbReference type="Gene3D" id="1.10.4190.10">
    <property type="entry name" value="Urease accessory protein UreF"/>
    <property type="match status" value="1"/>
</dbReference>
<dbReference type="HAMAP" id="MF_01385">
    <property type="entry name" value="UreF"/>
    <property type="match status" value="1"/>
</dbReference>
<dbReference type="InterPro" id="IPR002639">
    <property type="entry name" value="UreF"/>
</dbReference>
<dbReference type="InterPro" id="IPR038277">
    <property type="entry name" value="UreF_sf"/>
</dbReference>
<dbReference type="PANTHER" id="PTHR33620">
    <property type="entry name" value="UREASE ACCESSORY PROTEIN F"/>
    <property type="match status" value="1"/>
</dbReference>
<dbReference type="PANTHER" id="PTHR33620:SF1">
    <property type="entry name" value="UREASE ACCESSORY PROTEIN F"/>
    <property type="match status" value="1"/>
</dbReference>
<dbReference type="Pfam" id="PF01730">
    <property type="entry name" value="UreF"/>
    <property type="match status" value="1"/>
</dbReference>
<dbReference type="PIRSF" id="PIRSF009467">
    <property type="entry name" value="Ureas_acces_UreF"/>
    <property type="match status" value="1"/>
</dbReference>
<feature type="chain" id="PRO_0000344091" description="Urease accessory protein UreF">
    <location>
        <begin position="1"/>
        <end position="228"/>
    </location>
</feature>
<evidence type="ECO:0000255" key="1">
    <source>
        <dbReference type="HAMAP-Rule" id="MF_01385"/>
    </source>
</evidence>
<evidence type="ECO:0000305" key="2"/>
<gene>
    <name evidence="1" type="primary">ureF</name>
    <name type="ordered locus">BOV_0286</name>
</gene>
<keyword id="KW-0143">Chaperone</keyword>
<keyword id="KW-0963">Cytoplasm</keyword>
<keyword id="KW-0996">Nickel insertion</keyword>
<comment type="function">
    <text evidence="1">Required for maturation of urease via the functional incorporation of the urease nickel metallocenter.</text>
</comment>
<comment type="subunit">
    <text evidence="1">UreD, UreF and UreG form a complex that acts as a GTP-hydrolysis-dependent molecular chaperone, activating the urease apoprotein by helping to assemble the nickel containing metallocenter of UreC. The UreE protein probably delivers the nickel.</text>
</comment>
<comment type="subcellular location">
    <subcellularLocation>
        <location evidence="1">Cytoplasm</location>
    </subcellularLocation>
</comment>
<comment type="similarity">
    <text evidence="1">Belongs to the UreF family.</text>
</comment>
<comment type="sequence caution" evidence="2">
    <conflict type="erroneous initiation">
        <sequence resource="EMBL-CDS" id="ABQ61368"/>
    </conflict>
</comment>
<protein>
    <recommendedName>
        <fullName evidence="1">Urease accessory protein UreF</fullName>
    </recommendedName>
</protein>
<reference key="1">
    <citation type="journal article" date="2009" name="PLoS ONE">
        <title>Genome degradation in Brucella ovis corresponds with narrowing of its host range and tissue tropism.</title>
        <authorList>
            <person name="Tsolis R.M."/>
            <person name="Seshadri R."/>
            <person name="Santos R.L."/>
            <person name="Sangari F.J."/>
            <person name="Lobo J.M."/>
            <person name="de Jong M.F."/>
            <person name="Ren Q."/>
            <person name="Myers G."/>
            <person name="Brinkac L.M."/>
            <person name="Nelson W.C."/>
            <person name="Deboy R.T."/>
            <person name="Angiuoli S."/>
            <person name="Khouri H."/>
            <person name="Dimitrov G."/>
            <person name="Robinson J.R."/>
            <person name="Mulligan S."/>
            <person name="Walker R.L."/>
            <person name="Elzer P.E."/>
            <person name="Hassan K.A."/>
            <person name="Paulsen I.T."/>
        </authorList>
    </citation>
    <scope>NUCLEOTIDE SEQUENCE [LARGE SCALE GENOMIC DNA]</scope>
    <source>
        <strain>ATCC 25840 / 63/290 / NCTC 10512</strain>
    </source>
</reference>
<organism>
    <name type="scientific">Brucella ovis (strain ATCC 25840 / 63/290 / NCTC 10512)</name>
    <dbReference type="NCBI Taxonomy" id="444178"/>
    <lineage>
        <taxon>Bacteria</taxon>
        <taxon>Pseudomonadati</taxon>
        <taxon>Pseudomonadota</taxon>
        <taxon>Alphaproteobacteria</taxon>
        <taxon>Hyphomicrobiales</taxon>
        <taxon>Brucellaceae</taxon>
        <taxon>Brucella/Ochrobactrum group</taxon>
        <taxon>Brucella</taxon>
    </lineage>
</organism>
<proteinExistence type="inferred from homology"/>
<accession>A5VNL5</accession>
<name>UREF_BRUO2</name>